<evidence type="ECO:0000255" key="1">
    <source>
        <dbReference type="HAMAP-Rule" id="MF_00127"/>
    </source>
</evidence>
<dbReference type="EC" id="6.1.1.21" evidence="1"/>
<dbReference type="EMBL" id="CP001657">
    <property type="protein sequence ID" value="ACT14036.1"/>
    <property type="molecule type" value="Genomic_DNA"/>
</dbReference>
<dbReference type="RefSeq" id="WP_015841190.1">
    <property type="nucleotide sequence ID" value="NC_012917.1"/>
</dbReference>
<dbReference type="SMR" id="C6DBH3"/>
<dbReference type="STRING" id="561230.PC1_3013"/>
<dbReference type="GeneID" id="67793151"/>
<dbReference type="KEGG" id="pct:PC1_3013"/>
<dbReference type="eggNOG" id="COG0124">
    <property type="taxonomic scope" value="Bacteria"/>
</dbReference>
<dbReference type="HOGENOM" id="CLU_025113_1_1_6"/>
<dbReference type="OrthoDB" id="9800814at2"/>
<dbReference type="Proteomes" id="UP000002736">
    <property type="component" value="Chromosome"/>
</dbReference>
<dbReference type="GO" id="GO:0005737">
    <property type="term" value="C:cytoplasm"/>
    <property type="evidence" value="ECO:0007669"/>
    <property type="project" value="UniProtKB-SubCell"/>
</dbReference>
<dbReference type="GO" id="GO:0005524">
    <property type="term" value="F:ATP binding"/>
    <property type="evidence" value="ECO:0007669"/>
    <property type="project" value="UniProtKB-UniRule"/>
</dbReference>
<dbReference type="GO" id="GO:0004821">
    <property type="term" value="F:histidine-tRNA ligase activity"/>
    <property type="evidence" value="ECO:0007669"/>
    <property type="project" value="UniProtKB-UniRule"/>
</dbReference>
<dbReference type="GO" id="GO:0006427">
    <property type="term" value="P:histidyl-tRNA aminoacylation"/>
    <property type="evidence" value="ECO:0007669"/>
    <property type="project" value="UniProtKB-UniRule"/>
</dbReference>
<dbReference type="CDD" id="cd00773">
    <property type="entry name" value="HisRS-like_core"/>
    <property type="match status" value="1"/>
</dbReference>
<dbReference type="CDD" id="cd00859">
    <property type="entry name" value="HisRS_anticodon"/>
    <property type="match status" value="1"/>
</dbReference>
<dbReference type="FunFam" id="3.30.930.10:FF:000005">
    <property type="entry name" value="Histidine--tRNA ligase"/>
    <property type="match status" value="1"/>
</dbReference>
<dbReference type="FunFam" id="3.40.50.800:FF:000007">
    <property type="entry name" value="Histidine--tRNA ligase"/>
    <property type="match status" value="1"/>
</dbReference>
<dbReference type="Gene3D" id="3.40.50.800">
    <property type="entry name" value="Anticodon-binding domain"/>
    <property type="match status" value="1"/>
</dbReference>
<dbReference type="Gene3D" id="3.30.930.10">
    <property type="entry name" value="Bira Bifunctional Protein, Domain 2"/>
    <property type="match status" value="1"/>
</dbReference>
<dbReference type="HAMAP" id="MF_00127">
    <property type="entry name" value="His_tRNA_synth"/>
    <property type="match status" value="1"/>
</dbReference>
<dbReference type="InterPro" id="IPR006195">
    <property type="entry name" value="aa-tRNA-synth_II"/>
</dbReference>
<dbReference type="InterPro" id="IPR045864">
    <property type="entry name" value="aa-tRNA-synth_II/BPL/LPL"/>
</dbReference>
<dbReference type="InterPro" id="IPR004154">
    <property type="entry name" value="Anticodon-bd"/>
</dbReference>
<dbReference type="InterPro" id="IPR036621">
    <property type="entry name" value="Anticodon-bd_dom_sf"/>
</dbReference>
<dbReference type="InterPro" id="IPR015807">
    <property type="entry name" value="His-tRNA-ligase"/>
</dbReference>
<dbReference type="InterPro" id="IPR041715">
    <property type="entry name" value="HisRS-like_core"/>
</dbReference>
<dbReference type="InterPro" id="IPR004516">
    <property type="entry name" value="HisRS/HisZ"/>
</dbReference>
<dbReference type="InterPro" id="IPR033656">
    <property type="entry name" value="HisRS_anticodon"/>
</dbReference>
<dbReference type="NCBIfam" id="TIGR00442">
    <property type="entry name" value="hisS"/>
    <property type="match status" value="1"/>
</dbReference>
<dbReference type="PANTHER" id="PTHR43707:SF1">
    <property type="entry name" value="HISTIDINE--TRNA LIGASE, MITOCHONDRIAL-RELATED"/>
    <property type="match status" value="1"/>
</dbReference>
<dbReference type="PANTHER" id="PTHR43707">
    <property type="entry name" value="HISTIDYL-TRNA SYNTHETASE"/>
    <property type="match status" value="1"/>
</dbReference>
<dbReference type="Pfam" id="PF03129">
    <property type="entry name" value="HGTP_anticodon"/>
    <property type="match status" value="1"/>
</dbReference>
<dbReference type="Pfam" id="PF13393">
    <property type="entry name" value="tRNA-synt_His"/>
    <property type="match status" value="1"/>
</dbReference>
<dbReference type="PIRSF" id="PIRSF001549">
    <property type="entry name" value="His-tRNA_synth"/>
    <property type="match status" value="1"/>
</dbReference>
<dbReference type="SUPFAM" id="SSF52954">
    <property type="entry name" value="Class II aaRS ABD-related"/>
    <property type="match status" value="1"/>
</dbReference>
<dbReference type="SUPFAM" id="SSF55681">
    <property type="entry name" value="Class II aaRS and biotin synthetases"/>
    <property type="match status" value="1"/>
</dbReference>
<dbReference type="PROSITE" id="PS50862">
    <property type="entry name" value="AA_TRNA_LIGASE_II"/>
    <property type="match status" value="1"/>
</dbReference>
<organism>
    <name type="scientific">Pectobacterium carotovorum subsp. carotovorum (strain PC1)</name>
    <dbReference type="NCBI Taxonomy" id="561230"/>
    <lineage>
        <taxon>Bacteria</taxon>
        <taxon>Pseudomonadati</taxon>
        <taxon>Pseudomonadota</taxon>
        <taxon>Gammaproteobacteria</taxon>
        <taxon>Enterobacterales</taxon>
        <taxon>Pectobacteriaceae</taxon>
        <taxon>Pectobacterium</taxon>
    </lineage>
</organism>
<keyword id="KW-0030">Aminoacyl-tRNA synthetase</keyword>
<keyword id="KW-0067">ATP-binding</keyword>
<keyword id="KW-0963">Cytoplasm</keyword>
<keyword id="KW-0436">Ligase</keyword>
<keyword id="KW-0547">Nucleotide-binding</keyword>
<keyword id="KW-0648">Protein biosynthesis</keyword>
<reference key="1">
    <citation type="submission" date="2009-07" db="EMBL/GenBank/DDBJ databases">
        <title>Complete sequence of Pectobacterium carotovorum subsp. carotovorum PC1.</title>
        <authorList>
            <consortium name="US DOE Joint Genome Institute"/>
            <person name="Lucas S."/>
            <person name="Copeland A."/>
            <person name="Lapidus A."/>
            <person name="Glavina del Rio T."/>
            <person name="Tice H."/>
            <person name="Bruce D."/>
            <person name="Goodwin L."/>
            <person name="Pitluck S."/>
            <person name="Munk A.C."/>
            <person name="Brettin T."/>
            <person name="Detter J.C."/>
            <person name="Han C."/>
            <person name="Tapia R."/>
            <person name="Larimer F."/>
            <person name="Land M."/>
            <person name="Hauser L."/>
            <person name="Kyrpides N."/>
            <person name="Mikhailova N."/>
            <person name="Balakrishnan V."/>
            <person name="Glasner J."/>
            <person name="Perna N.T."/>
        </authorList>
    </citation>
    <scope>NUCLEOTIDE SEQUENCE [LARGE SCALE GENOMIC DNA]</scope>
    <source>
        <strain>PC1</strain>
    </source>
</reference>
<comment type="catalytic activity">
    <reaction evidence="1">
        <text>tRNA(His) + L-histidine + ATP = L-histidyl-tRNA(His) + AMP + diphosphate + H(+)</text>
        <dbReference type="Rhea" id="RHEA:17313"/>
        <dbReference type="Rhea" id="RHEA-COMP:9665"/>
        <dbReference type="Rhea" id="RHEA-COMP:9689"/>
        <dbReference type="ChEBI" id="CHEBI:15378"/>
        <dbReference type="ChEBI" id="CHEBI:30616"/>
        <dbReference type="ChEBI" id="CHEBI:33019"/>
        <dbReference type="ChEBI" id="CHEBI:57595"/>
        <dbReference type="ChEBI" id="CHEBI:78442"/>
        <dbReference type="ChEBI" id="CHEBI:78527"/>
        <dbReference type="ChEBI" id="CHEBI:456215"/>
        <dbReference type="EC" id="6.1.1.21"/>
    </reaction>
</comment>
<comment type="subunit">
    <text evidence="1">Homodimer.</text>
</comment>
<comment type="subcellular location">
    <subcellularLocation>
        <location evidence="1">Cytoplasm</location>
    </subcellularLocation>
</comment>
<comment type="similarity">
    <text evidence="1">Belongs to the class-II aminoacyl-tRNA synthetase family.</text>
</comment>
<protein>
    <recommendedName>
        <fullName evidence="1">Histidine--tRNA ligase</fullName>
        <ecNumber evidence="1">6.1.1.21</ecNumber>
    </recommendedName>
    <alternativeName>
        <fullName evidence="1">Histidyl-tRNA synthetase</fullName>
        <shortName evidence="1">HisRS</shortName>
    </alternativeName>
</protein>
<name>SYH_PECCP</name>
<feature type="chain" id="PRO_1000203140" description="Histidine--tRNA ligase">
    <location>
        <begin position="1"/>
        <end position="424"/>
    </location>
</feature>
<accession>C6DBH3</accession>
<proteinExistence type="inferred from homology"/>
<sequence length="424" mass="47383">MAKNIQAIRGMNDYLPAETALWQRIENSLKQVLSGYGYNEIRLPIVEQTPLFKRAIGEVTDVVEKEMYTFDDRNGDSLTLRPEGTAGCVRAGIEHGILYNQEQRLWYVGPMFRYERPQKGRYRQFHQLGCEVFGLQGPDIDAELILMTARWWRVLGIADHVKLELNSIGSLDARARYREALVAFLEQHKDQLDEDCLRRMYTNPLRVLDTKNPQIQVLLNDAPVLTDYLDDESREHFEALGELLTQSGIPYTVNPRLVRGLDYYNRTVFEWVTTSLGAQGTVCAGGRYDGMVEQLGGHATPAVGFAMGLERLVLLVQSVNPDFKAQPGVDVYLISSGAGTQVAAMQLAEKLRDALPQLKLMTNYGGGNFKKQFARADKWGARVALVLGENEVAAGQVVVKNLSNGEQDTLAQADVASRLATLLD</sequence>
<gene>
    <name evidence="1" type="primary">hisS</name>
    <name type="ordered locus">PC1_3013</name>
</gene>